<accession>Q0K9C0</accession>
<feature type="chain" id="PRO_1000000183" description="Ribosome-binding factor A">
    <location>
        <begin position="1"/>
        <end position="122"/>
    </location>
</feature>
<protein>
    <recommendedName>
        <fullName evidence="1">Ribosome-binding factor A</fullName>
    </recommendedName>
</protein>
<dbReference type="EMBL" id="AM260479">
    <property type="protein sequence ID" value="CAJ93401.1"/>
    <property type="molecule type" value="Genomic_DNA"/>
</dbReference>
<dbReference type="RefSeq" id="WP_010809484.1">
    <property type="nucleotide sequence ID" value="NZ_CP039287.1"/>
</dbReference>
<dbReference type="SMR" id="Q0K9C0"/>
<dbReference type="STRING" id="381666.H16_A2305"/>
<dbReference type="GeneID" id="34308085"/>
<dbReference type="KEGG" id="reh:H16_A2305"/>
<dbReference type="eggNOG" id="COG0858">
    <property type="taxonomic scope" value="Bacteria"/>
</dbReference>
<dbReference type="HOGENOM" id="CLU_089475_5_1_4"/>
<dbReference type="OrthoDB" id="307788at2"/>
<dbReference type="Proteomes" id="UP000008210">
    <property type="component" value="Chromosome 1"/>
</dbReference>
<dbReference type="GO" id="GO:0005829">
    <property type="term" value="C:cytosol"/>
    <property type="evidence" value="ECO:0007669"/>
    <property type="project" value="TreeGrafter"/>
</dbReference>
<dbReference type="GO" id="GO:0043024">
    <property type="term" value="F:ribosomal small subunit binding"/>
    <property type="evidence" value="ECO:0007669"/>
    <property type="project" value="TreeGrafter"/>
</dbReference>
<dbReference type="GO" id="GO:0030490">
    <property type="term" value="P:maturation of SSU-rRNA"/>
    <property type="evidence" value="ECO:0007669"/>
    <property type="project" value="UniProtKB-UniRule"/>
</dbReference>
<dbReference type="Gene3D" id="3.30.300.20">
    <property type="match status" value="1"/>
</dbReference>
<dbReference type="HAMAP" id="MF_00003">
    <property type="entry name" value="RbfA"/>
    <property type="match status" value="1"/>
</dbReference>
<dbReference type="InterPro" id="IPR015946">
    <property type="entry name" value="KH_dom-like_a/b"/>
</dbReference>
<dbReference type="InterPro" id="IPR000238">
    <property type="entry name" value="RbfA"/>
</dbReference>
<dbReference type="InterPro" id="IPR023799">
    <property type="entry name" value="RbfA_dom_sf"/>
</dbReference>
<dbReference type="NCBIfam" id="TIGR00082">
    <property type="entry name" value="rbfA"/>
    <property type="match status" value="1"/>
</dbReference>
<dbReference type="PANTHER" id="PTHR33515">
    <property type="entry name" value="RIBOSOME-BINDING FACTOR A, CHLOROPLASTIC-RELATED"/>
    <property type="match status" value="1"/>
</dbReference>
<dbReference type="PANTHER" id="PTHR33515:SF1">
    <property type="entry name" value="RIBOSOME-BINDING FACTOR A, CHLOROPLASTIC-RELATED"/>
    <property type="match status" value="1"/>
</dbReference>
<dbReference type="Pfam" id="PF02033">
    <property type="entry name" value="RBFA"/>
    <property type="match status" value="1"/>
</dbReference>
<dbReference type="SUPFAM" id="SSF89919">
    <property type="entry name" value="Ribosome-binding factor A, RbfA"/>
    <property type="match status" value="1"/>
</dbReference>
<evidence type="ECO:0000255" key="1">
    <source>
        <dbReference type="HAMAP-Rule" id="MF_00003"/>
    </source>
</evidence>
<comment type="function">
    <text evidence="1">One of several proteins that assist in the late maturation steps of the functional core of the 30S ribosomal subunit. Associates with free 30S ribosomal subunits (but not with 30S subunits that are part of 70S ribosomes or polysomes). Required for efficient processing of 16S rRNA. May interact with the 5'-terminal helix region of 16S rRNA.</text>
</comment>
<comment type="subunit">
    <text evidence="1">Monomer. Binds 30S ribosomal subunits, but not 50S ribosomal subunits or 70S ribosomes.</text>
</comment>
<comment type="subcellular location">
    <subcellularLocation>
        <location evidence="1">Cytoplasm</location>
    </subcellularLocation>
</comment>
<comment type="similarity">
    <text evidence="1">Belongs to the RbfA family.</text>
</comment>
<organism>
    <name type="scientific">Cupriavidus necator (strain ATCC 17699 / DSM 428 / KCTC 22496 / NCIMB 10442 / H16 / Stanier 337)</name>
    <name type="common">Ralstonia eutropha</name>
    <dbReference type="NCBI Taxonomy" id="381666"/>
    <lineage>
        <taxon>Bacteria</taxon>
        <taxon>Pseudomonadati</taxon>
        <taxon>Pseudomonadota</taxon>
        <taxon>Betaproteobacteria</taxon>
        <taxon>Burkholderiales</taxon>
        <taxon>Burkholderiaceae</taxon>
        <taxon>Cupriavidus</taxon>
    </lineage>
</organism>
<name>RBFA_CUPNH</name>
<proteinExistence type="inferred from homology"/>
<reference key="1">
    <citation type="journal article" date="2006" name="Nat. Biotechnol.">
        <title>Genome sequence of the bioplastic-producing 'Knallgas' bacterium Ralstonia eutropha H16.</title>
        <authorList>
            <person name="Pohlmann A."/>
            <person name="Fricke W.F."/>
            <person name="Reinecke F."/>
            <person name="Kusian B."/>
            <person name="Liesegang H."/>
            <person name="Cramm R."/>
            <person name="Eitinger T."/>
            <person name="Ewering C."/>
            <person name="Poetter M."/>
            <person name="Schwartz E."/>
            <person name="Strittmatter A."/>
            <person name="Voss I."/>
            <person name="Gottschalk G."/>
            <person name="Steinbuechel A."/>
            <person name="Friedrich B."/>
            <person name="Bowien B."/>
        </authorList>
    </citation>
    <scope>NUCLEOTIDE SEQUENCE [LARGE SCALE GENOMIC DNA]</scope>
    <source>
        <strain>ATCC 17699 / DSM 428 / KCTC 22496 / NCIMB 10442 / H16 / Stanier 337</strain>
    </source>
</reference>
<sequence length="122" mass="13744">MAKKGSISSRNLRISDQIQKDLAEMIQRELRDPRLGLVTLQSVALTPDYAHAKVYFTVLGAEAAEAEAILNEKAGYLHSLLYKRLHIHTVPTLRFFHDTSVEHAIEMSKLINEANATRSKDD</sequence>
<gene>
    <name evidence="1" type="primary">rbfA</name>
    <name type="ordered locus">H16_A2305</name>
</gene>
<keyword id="KW-0963">Cytoplasm</keyword>
<keyword id="KW-1185">Reference proteome</keyword>
<keyword id="KW-0690">Ribosome biogenesis</keyword>